<protein>
    <recommendedName>
        <fullName>mRNA cap guanine-N(7) methyltransferase</fullName>
        <ecNumber evidence="2">2.1.1.56</ecNumber>
    </recommendedName>
    <alternativeName>
        <fullName>mRNA (guanine-N(7))-methyltransferase</fullName>
    </alternativeName>
</protein>
<sequence length="378" mass="42956">MSAAEVADHYNNVRQAGIQDRKESRIFFMRNMNNWIKSQLINDAMKLVNENGVKSPVVLDIACGKGGDLRKWDITGAKHVVMADVADVSIQQAEERYKTMHKYPHDIFGAQFIVADCTKENLDDKIEIKEPFDLVSCQFAMHYSFVDEDSARTFLKNAVGKLKLGGVFIGTLPDADRIVWAVRNGTEGKFANDVCKITYEKVDELSEGNVPLFGAKFHFSLDEQVNCPEFLAYFSLVKHLLEEHDMELLFVHNFAEAITNWLVPGRRLLESMKGLETFPNRNLSGKTDEEYLEAKAKIDSLGDNVPKFVGTLSKSEWEAICMYLVFGFRKKKTTEKNLESEAPEIKKVTPVPLNEDTDKTAEKNEERIEEKEENPSHC</sequence>
<keyword id="KW-0489">Methyltransferase</keyword>
<keyword id="KW-0506">mRNA capping</keyword>
<keyword id="KW-0507">mRNA processing</keyword>
<keyword id="KW-0539">Nucleus</keyword>
<keyword id="KW-1185">Reference proteome</keyword>
<keyword id="KW-0694">RNA-binding</keyword>
<keyword id="KW-0949">S-adenosyl-L-methionine</keyword>
<keyword id="KW-0808">Transferase</keyword>
<feature type="chain" id="PRO_0000248328" description="mRNA cap guanine-N(7) methyltransferase">
    <location>
        <begin position="1"/>
        <end position="378"/>
    </location>
</feature>
<feature type="domain" description="mRNA cap 0 methyltransferase" evidence="3">
    <location>
        <begin position="24"/>
        <end position="331"/>
    </location>
</feature>
<feature type="region of interest" description="Disordered" evidence="4">
    <location>
        <begin position="335"/>
        <end position="378"/>
    </location>
</feature>
<feature type="compositionally biased region" description="Basic and acidic residues" evidence="4">
    <location>
        <begin position="335"/>
        <end position="347"/>
    </location>
</feature>
<feature type="compositionally biased region" description="Basic and acidic residues" evidence="4">
    <location>
        <begin position="356"/>
        <end position="378"/>
    </location>
</feature>
<feature type="binding site" evidence="3">
    <location>
        <begin position="33"/>
        <end position="34"/>
    </location>
    <ligand>
        <name>mRNA</name>
        <dbReference type="ChEBI" id="CHEBI:33699"/>
    </ligand>
    <ligandPart>
        <name>mRNA cap</name>
    </ligandPart>
</feature>
<feature type="binding site" evidence="3">
    <location>
        <position position="37"/>
    </location>
    <ligand>
        <name>S-adenosyl-L-methionine</name>
        <dbReference type="ChEBI" id="CHEBI:59789"/>
    </ligand>
</feature>
<feature type="binding site" evidence="3">
    <location>
        <position position="62"/>
    </location>
    <ligand>
        <name>S-adenosyl-L-methionine</name>
        <dbReference type="ChEBI" id="CHEBI:59789"/>
    </ligand>
</feature>
<feature type="binding site" evidence="3">
    <location>
        <position position="84"/>
    </location>
    <ligand>
        <name>S-adenosyl-L-methionine</name>
        <dbReference type="ChEBI" id="CHEBI:59789"/>
    </ligand>
</feature>
<feature type="binding site" evidence="2">
    <location>
        <position position="116"/>
    </location>
    <ligand>
        <name>S-adenosyl-L-methionine</name>
        <dbReference type="ChEBI" id="CHEBI:59789"/>
    </ligand>
</feature>
<feature type="binding site" evidence="2">
    <location>
        <position position="138"/>
    </location>
    <ligand>
        <name>S-adenosyl-L-methionine</name>
        <dbReference type="ChEBI" id="CHEBI:59789"/>
    </ligand>
</feature>
<feature type="binding site" evidence="2">
    <location>
        <position position="143"/>
    </location>
    <ligand>
        <name>S-adenosyl-L-methionine</name>
        <dbReference type="ChEBI" id="CHEBI:59789"/>
    </ligand>
</feature>
<feature type="site" description="mRNA cap binding" evidence="3">
    <location>
        <position position="65"/>
    </location>
</feature>
<feature type="site" description="mRNA cap binding" evidence="3">
    <location>
        <position position="71"/>
    </location>
</feature>
<feature type="site" description="mRNA cap binding" evidence="3">
    <location>
        <position position="96"/>
    </location>
</feature>
<feature type="site" description="mRNA cap binding" evidence="3">
    <location>
        <position position="142"/>
    </location>
</feature>
<feature type="site" description="mRNA cap binding" evidence="3">
    <location>
        <position position="229"/>
    </location>
</feature>
<feature type="site" description="mRNA cap binding" evidence="3">
    <location>
        <position position="323"/>
    </location>
</feature>
<reference key="1">
    <citation type="journal article" date="2003" name="PLoS Biol.">
        <title>The genome sequence of Caenorhabditis briggsae: a platform for comparative genomics.</title>
        <authorList>
            <person name="Stein L.D."/>
            <person name="Bao Z."/>
            <person name="Blasiar D."/>
            <person name="Blumenthal T."/>
            <person name="Brent M.R."/>
            <person name="Chen N."/>
            <person name="Chinwalla A."/>
            <person name="Clarke L."/>
            <person name="Clee C."/>
            <person name="Coghlan A."/>
            <person name="Coulson A."/>
            <person name="D'Eustachio P."/>
            <person name="Fitch D.H.A."/>
            <person name="Fulton L.A."/>
            <person name="Fulton R.E."/>
            <person name="Griffiths-Jones S."/>
            <person name="Harris T.W."/>
            <person name="Hillier L.W."/>
            <person name="Kamath R."/>
            <person name="Kuwabara P.E."/>
            <person name="Mardis E.R."/>
            <person name="Marra M.A."/>
            <person name="Miner T.L."/>
            <person name="Minx P."/>
            <person name="Mullikin J.C."/>
            <person name="Plumb R.W."/>
            <person name="Rogers J."/>
            <person name="Schein J.E."/>
            <person name="Sohrmann M."/>
            <person name="Spieth J."/>
            <person name="Stajich J.E."/>
            <person name="Wei C."/>
            <person name="Willey D."/>
            <person name="Wilson R.K."/>
            <person name="Durbin R.M."/>
            <person name="Waterston R.H."/>
        </authorList>
    </citation>
    <scope>NUCLEOTIDE SEQUENCE [LARGE SCALE GENOMIC DNA]</scope>
    <source>
        <strain>AF16</strain>
    </source>
</reference>
<name>MCES_CAEBR</name>
<accession>Q61E36</accession>
<accession>A8XEX5</accession>
<proteinExistence type="inferred from homology"/>
<organism>
    <name type="scientific">Caenorhabditis briggsae</name>
    <dbReference type="NCBI Taxonomy" id="6238"/>
    <lineage>
        <taxon>Eukaryota</taxon>
        <taxon>Metazoa</taxon>
        <taxon>Ecdysozoa</taxon>
        <taxon>Nematoda</taxon>
        <taxon>Chromadorea</taxon>
        <taxon>Rhabditida</taxon>
        <taxon>Rhabditina</taxon>
        <taxon>Rhabditomorpha</taxon>
        <taxon>Rhabditoidea</taxon>
        <taxon>Rhabditidae</taxon>
        <taxon>Peloderinae</taxon>
        <taxon>Caenorhabditis</taxon>
    </lineage>
</organism>
<gene>
    <name evidence="5" type="ORF">CBG12234</name>
</gene>
<comment type="function">
    <text evidence="1">mRNA-capping methyltransferase that methylates the N7 position of the added guanosine to the 5'-cap structure of mRNAs. Binds RNA containing 5'-terminal GpppC (By similarity).</text>
</comment>
<comment type="catalytic activity">
    <reaction evidence="2 3">
        <text>a 5'-end (5'-triphosphoguanosine)-ribonucleoside in mRNA + S-adenosyl-L-methionine = a 5'-end (N(7)-methyl 5'-triphosphoguanosine)-ribonucleoside in mRNA + S-adenosyl-L-homocysteine</text>
        <dbReference type="Rhea" id="RHEA:67008"/>
        <dbReference type="Rhea" id="RHEA-COMP:17166"/>
        <dbReference type="Rhea" id="RHEA-COMP:17167"/>
        <dbReference type="ChEBI" id="CHEBI:57856"/>
        <dbReference type="ChEBI" id="CHEBI:59789"/>
        <dbReference type="ChEBI" id="CHEBI:156461"/>
        <dbReference type="ChEBI" id="CHEBI:167617"/>
        <dbReference type="EC" id="2.1.1.56"/>
    </reaction>
</comment>
<comment type="subcellular location">
    <subcellularLocation>
        <location evidence="1">Nucleus</location>
    </subcellularLocation>
</comment>
<comment type="similarity">
    <text evidence="3">Belongs to the class I-like SAM-binding methyltransferase superfamily. mRNA cap 0 methyltransferase family.</text>
</comment>
<evidence type="ECO:0000250" key="1"/>
<evidence type="ECO:0000250" key="2">
    <source>
        <dbReference type="UniProtKB" id="O43148"/>
    </source>
</evidence>
<evidence type="ECO:0000255" key="3">
    <source>
        <dbReference type="PROSITE-ProRule" id="PRU00895"/>
    </source>
</evidence>
<evidence type="ECO:0000256" key="4">
    <source>
        <dbReference type="SAM" id="MobiDB-lite"/>
    </source>
</evidence>
<evidence type="ECO:0000312" key="5">
    <source>
        <dbReference type="WormBase" id="CBG12234a"/>
    </source>
</evidence>
<dbReference type="EC" id="2.1.1.56" evidence="2"/>
<dbReference type="EMBL" id="HE600958">
    <property type="protein sequence ID" value="CAP31197.3"/>
    <property type="molecule type" value="Genomic_DNA"/>
</dbReference>
<dbReference type="SMR" id="Q61E36"/>
<dbReference type="FunCoup" id="Q61E36">
    <property type="interactions" value="3111"/>
</dbReference>
<dbReference type="STRING" id="6238.Q61E36"/>
<dbReference type="EnsemblMetazoa" id="CBG12234a.1">
    <property type="protein sequence ID" value="CBG12234a.1"/>
    <property type="gene ID" value="WBGene00033215"/>
</dbReference>
<dbReference type="KEGG" id="cbr:CBG_12234"/>
<dbReference type="CTD" id="8581872"/>
<dbReference type="WormBase" id="CBG12234a">
    <property type="protein sequence ID" value="CBP09114"/>
    <property type="gene ID" value="WBGene00033215"/>
</dbReference>
<dbReference type="eggNOG" id="KOG1975">
    <property type="taxonomic scope" value="Eukaryota"/>
</dbReference>
<dbReference type="HOGENOM" id="CLU_020346_0_0_1"/>
<dbReference type="InParanoid" id="Q61E36"/>
<dbReference type="OMA" id="LITGDCF"/>
<dbReference type="Proteomes" id="UP000008549">
    <property type="component" value="Unassembled WGS sequence"/>
</dbReference>
<dbReference type="GO" id="GO:0005634">
    <property type="term" value="C:nucleus"/>
    <property type="evidence" value="ECO:0000250"/>
    <property type="project" value="UniProtKB"/>
</dbReference>
<dbReference type="GO" id="GO:0004482">
    <property type="term" value="F:mRNA 5'-cap (guanine-N7-)-methyltransferase activity"/>
    <property type="evidence" value="ECO:0000250"/>
    <property type="project" value="UniProtKB"/>
</dbReference>
<dbReference type="GO" id="GO:0003723">
    <property type="term" value="F:RNA binding"/>
    <property type="evidence" value="ECO:0000250"/>
    <property type="project" value="UniProtKB"/>
</dbReference>
<dbReference type="GO" id="GO:0006370">
    <property type="term" value="P:7-methylguanosine mRNA capping"/>
    <property type="evidence" value="ECO:0000250"/>
    <property type="project" value="UniProtKB"/>
</dbReference>
<dbReference type="CDD" id="cd02440">
    <property type="entry name" value="AdoMet_MTases"/>
    <property type="match status" value="1"/>
</dbReference>
<dbReference type="Gene3D" id="3.40.50.150">
    <property type="entry name" value="Vaccinia Virus protein VP39"/>
    <property type="match status" value="1"/>
</dbReference>
<dbReference type="InterPro" id="IPR004971">
    <property type="entry name" value="mRNA_G-N7_MeTrfase_dom"/>
</dbReference>
<dbReference type="InterPro" id="IPR016899">
    <property type="entry name" value="mRNA_G-N7_MeTrfase_euk"/>
</dbReference>
<dbReference type="InterPro" id="IPR039753">
    <property type="entry name" value="RG7MT1"/>
</dbReference>
<dbReference type="InterPro" id="IPR029063">
    <property type="entry name" value="SAM-dependent_MTases_sf"/>
</dbReference>
<dbReference type="PANTHER" id="PTHR12189:SF2">
    <property type="entry name" value="MRNA CAP GUANINE-N7 METHYLTRANSFERASE"/>
    <property type="match status" value="1"/>
</dbReference>
<dbReference type="PANTHER" id="PTHR12189">
    <property type="entry name" value="MRNA GUANINE-7- METHYLTRANSFERASE"/>
    <property type="match status" value="1"/>
</dbReference>
<dbReference type="Pfam" id="PF03291">
    <property type="entry name" value="mRNA_G-N7_MeTrfase"/>
    <property type="match status" value="1"/>
</dbReference>
<dbReference type="PIRSF" id="PIRSF028762">
    <property type="entry name" value="ABD1"/>
    <property type="match status" value="1"/>
</dbReference>
<dbReference type="SUPFAM" id="SSF53335">
    <property type="entry name" value="S-adenosyl-L-methionine-dependent methyltransferases"/>
    <property type="match status" value="1"/>
</dbReference>
<dbReference type="PROSITE" id="PS51562">
    <property type="entry name" value="RNA_CAP0_MT"/>
    <property type="match status" value="1"/>
</dbReference>